<dbReference type="EC" id="1.18.1.2" evidence="1"/>
<dbReference type="EMBL" id="AE017196">
    <property type="protein sequence ID" value="AAS14644.1"/>
    <property type="molecule type" value="Genomic_DNA"/>
</dbReference>
<dbReference type="RefSeq" id="WP_010962962.1">
    <property type="nucleotide sequence ID" value="NZ_OX384529.1"/>
</dbReference>
<dbReference type="SMR" id="Q73GH2"/>
<dbReference type="EnsemblBacteria" id="AAS14644">
    <property type="protein sequence ID" value="AAS14644"/>
    <property type="gene ID" value="WD_0982"/>
</dbReference>
<dbReference type="KEGG" id="wol:WD_0982"/>
<dbReference type="eggNOG" id="COG0492">
    <property type="taxonomic scope" value="Bacteria"/>
</dbReference>
<dbReference type="Proteomes" id="UP000008215">
    <property type="component" value="Chromosome"/>
</dbReference>
<dbReference type="GO" id="GO:0004324">
    <property type="term" value="F:ferredoxin-NADP+ reductase activity"/>
    <property type="evidence" value="ECO:0007669"/>
    <property type="project" value="UniProtKB-UniRule"/>
</dbReference>
<dbReference type="GO" id="GO:0050660">
    <property type="term" value="F:flavin adenine dinucleotide binding"/>
    <property type="evidence" value="ECO:0007669"/>
    <property type="project" value="UniProtKB-UniRule"/>
</dbReference>
<dbReference type="GO" id="GO:0050661">
    <property type="term" value="F:NADP binding"/>
    <property type="evidence" value="ECO:0007669"/>
    <property type="project" value="UniProtKB-UniRule"/>
</dbReference>
<dbReference type="Gene3D" id="3.50.50.60">
    <property type="entry name" value="FAD/NAD(P)-binding domain"/>
    <property type="match status" value="2"/>
</dbReference>
<dbReference type="HAMAP" id="MF_01685">
    <property type="entry name" value="FENR2"/>
    <property type="match status" value="1"/>
</dbReference>
<dbReference type="InterPro" id="IPR036188">
    <property type="entry name" value="FAD/NAD-bd_sf"/>
</dbReference>
<dbReference type="InterPro" id="IPR023753">
    <property type="entry name" value="FAD/NAD-binding_dom"/>
</dbReference>
<dbReference type="InterPro" id="IPR022890">
    <property type="entry name" value="Fd--NADP_Rdtase_type_2"/>
</dbReference>
<dbReference type="InterPro" id="IPR050097">
    <property type="entry name" value="Ferredoxin-NADP_redctase_2"/>
</dbReference>
<dbReference type="PANTHER" id="PTHR48105">
    <property type="entry name" value="THIOREDOXIN REDUCTASE 1-RELATED-RELATED"/>
    <property type="match status" value="1"/>
</dbReference>
<dbReference type="Pfam" id="PF07992">
    <property type="entry name" value="Pyr_redox_2"/>
    <property type="match status" value="1"/>
</dbReference>
<dbReference type="PRINTS" id="PR00368">
    <property type="entry name" value="FADPNR"/>
</dbReference>
<dbReference type="PRINTS" id="PR00469">
    <property type="entry name" value="PNDRDTASEII"/>
</dbReference>
<dbReference type="SUPFAM" id="SSF51905">
    <property type="entry name" value="FAD/NAD(P)-binding domain"/>
    <property type="match status" value="1"/>
</dbReference>
<comment type="catalytic activity">
    <reaction evidence="1">
        <text>2 reduced [2Fe-2S]-[ferredoxin] + NADP(+) + H(+) = 2 oxidized [2Fe-2S]-[ferredoxin] + NADPH</text>
        <dbReference type="Rhea" id="RHEA:20125"/>
        <dbReference type="Rhea" id="RHEA-COMP:10000"/>
        <dbReference type="Rhea" id="RHEA-COMP:10001"/>
        <dbReference type="ChEBI" id="CHEBI:15378"/>
        <dbReference type="ChEBI" id="CHEBI:33737"/>
        <dbReference type="ChEBI" id="CHEBI:33738"/>
        <dbReference type="ChEBI" id="CHEBI:57783"/>
        <dbReference type="ChEBI" id="CHEBI:58349"/>
        <dbReference type="EC" id="1.18.1.2"/>
    </reaction>
</comment>
<comment type="cofactor">
    <cofactor evidence="1">
        <name>FAD</name>
        <dbReference type="ChEBI" id="CHEBI:57692"/>
    </cofactor>
    <text evidence="1">Binds 1 FAD per subunit.</text>
</comment>
<comment type="subunit">
    <text evidence="1">Homodimer.</text>
</comment>
<comment type="similarity">
    <text evidence="1">Belongs to the ferredoxin--NADP reductase type 2 family.</text>
</comment>
<name>FENR_WOLPM</name>
<proteinExistence type="inferred from homology"/>
<reference key="1">
    <citation type="journal article" date="2004" name="PLoS Biol.">
        <title>Phylogenomics of the reproductive parasite Wolbachia pipientis wMel: a streamlined genome overrun by mobile genetic elements.</title>
        <authorList>
            <person name="Wu M."/>
            <person name="Sun L.V."/>
            <person name="Vamathevan J.J."/>
            <person name="Riegler M."/>
            <person name="DeBoy R.T."/>
            <person name="Brownlie J.C."/>
            <person name="McGraw E.A."/>
            <person name="Martin W."/>
            <person name="Esser C."/>
            <person name="Ahmadinejad N."/>
            <person name="Wiegand C."/>
            <person name="Madupu R."/>
            <person name="Beanan M.J."/>
            <person name="Brinkac L.M."/>
            <person name="Daugherty S.C."/>
            <person name="Durkin A.S."/>
            <person name="Kolonay J.F."/>
            <person name="Nelson W.C."/>
            <person name="Mohamoud Y."/>
            <person name="Lee P."/>
            <person name="Berry K.J."/>
            <person name="Young M.B."/>
            <person name="Utterback T.R."/>
            <person name="Weidman J.F."/>
            <person name="Nierman W.C."/>
            <person name="Paulsen I.T."/>
            <person name="Nelson K.E."/>
            <person name="Tettelin H."/>
            <person name="O'Neill S.L."/>
            <person name="Eisen J.A."/>
        </authorList>
    </citation>
    <scope>NUCLEOTIDE SEQUENCE [LARGE SCALE GENOMIC DNA]</scope>
</reference>
<feature type="chain" id="PRO_0000364984" description="Ferredoxin--NADP reductase">
    <location>
        <begin position="1"/>
        <end position="338"/>
    </location>
</feature>
<feature type="binding site" evidence="1">
    <location>
        <position position="32"/>
    </location>
    <ligand>
        <name>FAD</name>
        <dbReference type="ChEBI" id="CHEBI:57692"/>
    </ligand>
</feature>
<feature type="binding site" evidence="1">
    <location>
        <position position="40"/>
    </location>
    <ligand>
        <name>FAD</name>
        <dbReference type="ChEBI" id="CHEBI:57692"/>
    </ligand>
</feature>
<feature type="binding site" evidence="1">
    <location>
        <position position="45"/>
    </location>
    <ligand>
        <name>FAD</name>
        <dbReference type="ChEBI" id="CHEBI:57692"/>
    </ligand>
</feature>
<feature type="binding site" evidence="1">
    <location>
        <position position="85"/>
    </location>
    <ligand>
        <name>FAD</name>
        <dbReference type="ChEBI" id="CHEBI:57692"/>
    </ligand>
</feature>
<feature type="binding site" evidence="1">
    <location>
        <position position="120"/>
    </location>
    <ligand>
        <name>FAD</name>
        <dbReference type="ChEBI" id="CHEBI:57692"/>
    </ligand>
</feature>
<feature type="binding site" evidence="1">
    <location>
        <position position="287"/>
    </location>
    <ligand>
        <name>FAD</name>
        <dbReference type="ChEBI" id="CHEBI:57692"/>
    </ligand>
</feature>
<feature type="binding site" evidence="1">
    <location>
        <position position="327"/>
    </location>
    <ligand>
        <name>FAD</name>
        <dbReference type="ChEBI" id="CHEBI:57692"/>
    </ligand>
</feature>
<protein>
    <recommendedName>
        <fullName evidence="1">Ferredoxin--NADP reductase</fullName>
        <shortName evidence="1">FNR</shortName>
        <shortName evidence="1">Fd-NADP(+) reductase</shortName>
        <ecNumber evidence="1">1.18.1.2</ecNumber>
    </recommendedName>
</protein>
<organism>
    <name type="scientific">Wolbachia pipientis wMel</name>
    <dbReference type="NCBI Taxonomy" id="163164"/>
    <lineage>
        <taxon>Bacteria</taxon>
        <taxon>Pseudomonadati</taxon>
        <taxon>Pseudomonadota</taxon>
        <taxon>Alphaproteobacteria</taxon>
        <taxon>Rickettsiales</taxon>
        <taxon>Anaplasmataceae</taxon>
        <taxon>Wolbachieae</taxon>
        <taxon>Wolbachia</taxon>
    </lineage>
</organism>
<evidence type="ECO:0000255" key="1">
    <source>
        <dbReference type="HAMAP-Rule" id="MF_01685"/>
    </source>
</evidence>
<keyword id="KW-0274">FAD</keyword>
<keyword id="KW-0285">Flavoprotein</keyword>
<keyword id="KW-0521">NADP</keyword>
<keyword id="KW-0560">Oxidoreductase</keyword>
<gene>
    <name type="ordered locus">WD_0982</name>
</gene>
<accession>Q73GH2</accession>
<sequence length="338" mass="37270">MKTDIVIIGAGPVGIFTAFQAGMLDMRCHIIDVLDQAGGQCTALYPEKPIYDIPGYPVITAQKLIEQLMEQSSPFKPVYHLSQKVEKISNNEGESFTVITNIGTEVKCKAVIVAAGNGMFKPNRPPLSGILEYENKSVFYSVNKISDFQDKTIVIAGGGDSAADWTVELSKVAKKIYVIHRRKEFRCTPETRNKLESLEIDGKIELVVPYQLHELAGGNGQLSAVIVKNIASKEEKEISADFLLPFFGLSMNLGPINNWGIQLEHSRIVVDPATLKTSRDRIYAIGDIAIYSGKLKLILNGFAESAMACYDIYKVIHNSPVNFQYSTSKGIHGKEKLP</sequence>